<feature type="chain" id="PRO_1000014690" description="Large ribosomal subunit protein bL31B">
    <location>
        <begin position="1"/>
        <end position="87"/>
    </location>
</feature>
<evidence type="ECO:0000255" key="1">
    <source>
        <dbReference type="HAMAP-Rule" id="MF_00502"/>
    </source>
</evidence>
<evidence type="ECO:0000305" key="2"/>
<proteinExistence type="inferred from homology"/>
<comment type="subunit">
    <text evidence="1">Part of the 50S ribosomal subunit.</text>
</comment>
<comment type="similarity">
    <text evidence="1">Belongs to the bacterial ribosomal protein bL31 family. Type B subfamily.</text>
</comment>
<gene>
    <name evidence="1" type="primary">rpmE2</name>
    <name type="ordered locus">BMASAVP1_A1860</name>
</gene>
<dbReference type="EMBL" id="CP000526">
    <property type="protein sequence ID" value="ABM52396.1"/>
    <property type="molecule type" value="Genomic_DNA"/>
</dbReference>
<dbReference type="RefSeq" id="WP_004193070.1">
    <property type="nucleotide sequence ID" value="NC_008785.1"/>
</dbReference>
<dbReference type="SMR" id="A1V4M5"/>
<dbReference type="KEGG" id="bmv:BMASAVP1_A1860"/>
<dbReference type="HOGENOM" id="CLU_114306_2_1_4"/>
<dbReference type="GO" id="GO:1990904">
    <property type="term" value="C:ribonucleoprotein complex"/>
    <property type="evidence" value="ECO:0007669"/>
    <property type="project" value="UniProtKB-KW"/>
</dbReference>
<dbReference type="GO" id="GO:0005840">
    <property type="term" value="C:ribosome"/>
    <property type="evidence" value="ECO:0007669"/>
    <property type="project" value="UniProtKB-KW"/>
</dbReference>
<dbReference type="GO" id="GO:0003735">
    <property type="term" value="F:structural constituent of ribosome"/>
    <property type="evidence" value="ECO:0007669"/>
    <property type="project" value="InterPro"/>
</dbReference>
<dbReference type="GO" id="GO:0006412">
    <property type="term" value="P:translation"/>
    <property type="evidence" value="ECO:0007669"/>
    <property type="project" value="UniProtKB-UniRule"/>
</dbReference>
<dbReference type="Gene3D" id="4.10.830.30">
    <property type="entry name" value="Ribosomal protein L31"/>
    <property type="match status" value="1"/>
</dbReference>
<dbReference type="HAMAP" id="MF_00502">
    <property type="entry name" value="Ribosomal_bL31_2"/>
    <property type="match status" value="1"/>
</dbReference>
<dbReference type="InterPro" id="IPR034704">
    <property type="entry name" value="Ribosomal_bL28/bL31-like_sf"/>
</dbReference>
<dbReference type="InterPro" id="IPR002150">
    <property type="entry name" value="Ribosomal_bL31"/>
</dbReference>
<dbReference type="InterPro" id="IPR027493">
    <property type="entry name" value="Ribosomal_bL31_B"/>
</dbReference>
<dbReference type="InterPro" id="IPR042105">
    <property type="entry name" value="Ribosomal_bL31_sf"/>
</dbReference>
<dbReference type="NCBIfam" id="TIGR00105">
    <property type="entry name" value="L31"/>
    <property type="match status" value="1"/>
</dbReference>
<dbReference type="NCBIfam" id="NF002462">
    <property type="entry name" value="PRK01678.1"/>
    <property type="match status" value="1"/>
</dbReference>
<dbReference type="PANTHER" id="PTHR33280">
    <property type="entry name" value="50S RIBOSOMAL PROTEIN L31, CHLOROPLASTIC"/>
    <property type="match status" value="1"/>
</dbReference>
<dbReference type="PANTHER" id="PTHR33280:SF1">
    <property type="entry name" value="LARGE RIBOSOMAL SUBUNIT PROTEIN BL31C"/>
    <property type="match status" value="1"/>
</dbReference>
<dbReference type="Pfam" id="PF01197">
    <property type="entry name" value="Ribosomal_L31"/>
    <property type="match status" value="1"/>
</dbReference>
<dbReference type="PRINTS" id="PR01249">
    <property type="entry name" value="RIBOSOMALL31"/>
</dbReference>
<dbReference type="SUPFAM" id="SSF143800">
    <property type="entry name" value="L28p-like"/>
    <property type="match status" value="1"/>
</dbReference>
<accession>A1V4M5</accession>
<keyword id="KW-0687">Ribonucleoprotein</keyword>
<keyword id="KW-0689">Ribosomal protein</keyword>
<sequence length="87" mass="9912">MKQGIHPDYREVVFQDMSNGFKFITRSTIQTRETIEFEGKTYPLAKIEVSSESHSFYTGQQKIMDTAGRVEKFKNKFGARASGKAAK</sequence>
<organism>
    <name type="scientific">Burkholderia mallei (strain SAVP1)</name>
    <dbReference type="NCBI Taxonomy" id="320388"/>
    <lineage>
        <taxon>Bacteria</taxon>
        <taxon>Pseudomonadati</taxon>
        <taxon>Pseudomonadota</taxon>
        <taxon>Betaproteobacteria</taxon>
        <taxon>Burkholderiales</taxon>
        <taxon>Burkholderiaceae</taxon>
        <taxon>Burkholderia</taxon>
        <taxon>pseudomallei group</taxon>
    </lineage>
</organism>
<protein>
    <recommendedName>
        <fullName evidence="1">Large ribosomal subunit protein bL31B</fullName>
    </recommendedName>
    <alternativeName>
        <fullName evidence="2">50S ribosomal protein L31 type B</fullName>
    </alternativeName>
</protein>
<name>RL31B_BURMS</name>
<reference key="1">
    <citation type="journal article" date="2010" name="Genome Biol. Evol.">
        <title>Continuing evolution of Burkholderia mallei through genome reduction and large-scale rearrangements.</title>
        <authorList>
            <person name="Losada L."/>
            <person name="Ronning C.M."/>
            <person name="DeShazer D."/>
            <person name="Woods D."/>
            <person name="Fedorova N."/>
            <person name="Kim H.S."/>
            <person name="Shabalina S.A."/>
            <person name="Pearson T.R."/>
            <person name="Brinkac L."/>
            <person name="Tan P."/>
            <person name="Nandi T."/>
            <person name="Crabtree J."/>
            <person name="Badger J."/>
            <person name="Beckstrom-Sternberg S."/>
            <person name="Saqib M."/>
            <person name="Schutzer S.E."/>
            <person name="Keim P."/>
            <person name="Nierman W.C."/>
        </authorList>
    </citation>
    <scope>NUCLEOTIDE SEQUENCE [LARGE SCALE GENOMIC DNA]</scope>
    <source>
        <strain>SAVP1</strain>
    </source>
</reference>